<comment type="function">
    <text evidence="4">Involved in nucleolar processing of pre-18S ribosomal RNA and ribosome assembly.</text>
</comment>
<comment type="subunit">
    <text evidence="4 5">Interacts with snoRNA U3. Interacts with MPP10. Interacts (via WD repeats) with UTP18. Component of the ribosomal small subunit (SSU) processome composed of at least 40 protein subunits and snoRNA U3.</text>
</comment>
<comment type="interaction">
    <interactant intactId="EBI-359">
        <id>Q06078</id>
    </interactant>
    <interactant intactId="EBI-5896">
        <id>Q12220</id>
        <label>DIP2</label>
    </interactant>
    <organismsDiffer>false</organismsDiffer>
    <experiments>3</experiments>
</comment>
<comment type="interaction">
    <interactant intactId="EBI-359">
        <id>Q06078</id>
    </interactant>
    <interactant intactId="EBI-6482">
        <id>P38333</id>
        <label>ENP1</label>
    </interactant>
    <organismsDiffer>false</organismsDiffer>
    <experiments>4</experiments>
</comment>
<comment type="interaction">
    <interactant intactId="EBI-359">
        <id>Q06078</id>
    </interactant>
    <interactant intactId="EBI-14332">
        <id>P25635</id>
        <label>PWP2</label>
    </interactant>
    <organismsDiffer>false</organismsDiffer>
    <experiments>16</experiments>
</comment>
<comment type="interaction">
    <interactant intactId="EBI-359">
        <id>Q06078</id>
    </interactant>
    <interactant intactId="EBI-16011">
        <id>Q05022</id>
        <label>RRP5</label>
    </interactant>
    <organismsDiffer>false</organismsDiffer>
    <experiments>3</experiments>
</comment>
<comment type="interaction">
    <interactant intactId="EBI-359">
        <id>Q06078</id>
    </interactant>
    <interactant intactId="EBI-36084">
        <id>Q12136</id>
        <label>SAS10</label>
    </interactant>
    <organismsDiffer>false</organismsDiffer>
    <experiments>3</experiments>
</comment>
<comment type="interaction">
    <interactant intactId="EBI-359">
        <id>Q06078</id>
    </interactant>
    <interactant intactId="EBI-4534">
        <id>P40362</id>
        <label>UTP18</label>
    </interactant>
    <organismsDiffer>false</organismsDiffer>
    <experiments>12</experiments>
</comment>
<comment type="interaction">
    <interactant intactId="EBI-359">
        <id>Q06078</id>
    </interactant>
    <interactant intactId="EBI-25113">
        <id>P40498</id>
        <label>UTP25</label>
    </interactant>
    <organismsDiffer>false</organismsDiffer>
    <experiments>3</experiments>
</comment>
<comment type="interaction">
    <interactant intactId="EBI-359">
        <id>Q06078</id>
    </interactant>
    <interactant intactId="EBI-22119">
        <id>Q02354</id>
        <label>UTP6</label>
    </interactant>
    <organismsDiffer>false</organismsDiffer>
    <experiments>16</experiments>
</comment>
<comment type="subcellular location">
    <subcellularLocation>
        <location evidence="2 4">Nucleus</location>
        <location evidence="2 4">Nucleolus</location>
    </subcellularLocation>
</comment>
<comment type="domain">
    <text>The WD repeats are grouped into two tandem seven-bladed beta-propeller regions.</text>
</comment>
<comment type="miscellaneous">
    <text evidence="3">Present with 2020 molecules/cell in log phase SD medium.</text>
</comment>
<protein>
    <recommendedName>
        <fullName>U3 small nucleolar RNA-associated protein 21</fullName>
        <shortName>U3 snoRNA-associated protein 21</shortName>
    </recommendedName>
    <alternativeName>
        <fullName>U three protein 21</fullName>
    </alternativeName>
</protein>
<dbReference type="EMBL" id="U19729">
    <property type="protein sequence ID" value="AAB82361.1"/>
    <property type="molecule type" value="Genomic_DNA"/>
</dbReference>
<dbReference type="EMBL" id="BK006945">
    <property type="protein sequence ID" value="DAA09709.1"/>
    <property type="molecule type" value="Genomic_DNA"/>
</dbReference>
<dbReference type="PIR" id="S55965">
    <property type="entry name" value="S55965"/>
</dbReference>
<dbReference type="RefSeq" id="NP_013513.3">
    <property type="nucleotide sequence ID" value="NM_001182297.3"/>
</dbReference>
<dbReference type="PDB" id="4HNX">
    <property type="method" value="X-ray"/>
    <property type="resolution" value="2.10 A"/>
    <property type="chains" value="A=1-684"/>
</dbReference>
<dbReference type="PDB" id="4NSX">
    <property type="method" value="X-ray"/>
    <property type="resolution" value="2.10 A"/>
    <property type="chains" value="A=1-684"/>
</dbReference>
<dbReference type="PDB" id="5JPQ">
    <property type="method" value="EM"/>
    <property type="resolution" value="7.30 A"/>
    <property type="chains" value="I=1-939"/>
</dbReference>
<dbReference type="PDB" id="5TZS">
    <property type="method" value="EM"/>
    <property type="resolution" value="5.10 A"/>
    <property type="chains" value="T=21-673"/>
</dbReference>
<dbReference type="PDB" id="5WLC">
    <property type="method" value="EM"/>
    <property type="resolution" value="3.80 A"/>
    <property type="chains" value="LT=1-939"/>
</dbReference>
<dbReference type="PDB" id="5WYJ">
    <property type="method" value="EM"/>
    <property type="resolution" value="8.70 A"/>
    <property type="chains" value="BE=1-939"/>
</dbReference>
<dbReference type="PDB" id="5WYK">
    <property type="method" value="EM"/>
    <property type="resolution" value="4.50 A"/>
    <property type="chains" value="BE=1-939"/>
</dbReference>
<dbReference type="PDB" id="6KE6">
    <property type="method" value="EM"/>
    <property type="resolution" value="3.40 A"/>
    <property type="chains" value="BE=1-939"/>
</dbReference>
<dbReference type="PDB" id="6LQP">
    <property type="method" value="EM"/>
    <property type="resolution" value="3.20 A"/>
    <property type="chains" value="BE=1-939"/>
</dbReference>
<dbReference type="PDB" id="6LQQ">
    <property type="method" value="EM"/>
    <property type="resolution" value="4.10 A"/>
    <property type="chains" value="BE=1-939"/>
</dbReference>
<dbReference type="PDB" id="6LQR">
    <property type="method" value="EM"/>
    <property type="resolution" value="8.60 A"/>
    <property type="chains" value="BE=1-939"/>
</dbReference>
<dbReference type="PDB" id="6LQS">
    <property type="method" value="EM"/>
    <property type="resolution" value="3.80 A"/>
    <property type="chains" value="BE=1-939"/>
</dbReference>
<dbReference type="PDB" id="6LQT">
    <property type="method" value="EM"/>
    <property type="resolution" value="4.90 A"/>
    <property type="chains" value="BE=1-939"/>
</dbReference>
<dbReference type="PDB" id="6LQU">
    <property type="method" value="EM"/>
    <property type="resolution" value="3.70 A"/>
    <property type="chains" value="BE=1-939"/>
</dbReference>
<dbReference type="PDB" id="6LQV">
    <property type="method" value="EM"/>
    <property type="resolution" value="4.80 A"/>
    <property type="chains" value="BE=1-939"/>
</dbReference>
<dbReference type="PDB" id="6ND4">
    <property type="method" value="EM"/>
    <property type="resolution" value="4.30 A"/>
    <property type="chains" value="T=1-939"/>
</dbReference>
<dbReference type="PDB" id="6ZQA">
    <property type="method" value="EM"/>
    <property type="resolution" value="4.40 A"/>
    <property type="chains" value="UU=1-939"/>
</dbReference>
<dbReference type="PDB" id="6ZQB">
    <property type="method" value="EM"/>
    <property type="resolution" value="3.90 A"/>
    <property type="chains" value="UU=1-939"/>
</dbReference>
<dbReference type="PDB" id="6ZQC">
    <property type="method" value="EM"/>
    <property type="resolution" value="3.80 A"/>
    <property type="chains" value="UU=1-939"/>
</dbReference>
<dbReference type="PDB" id="6ZQD">
    <property type="method" value="EM"/>
    <property type="resolution" value="3.80 A"/>
    <property type="chains" value="UU=1-939"/>
</dbReference>
<dbReference type="PDB" id="6ZQE">
    <property type="method" value="EM"/>
    <property type="resolution" value="7.10 A"/>
    <property type="chains" value="UU=1-939"/>
</dbReference>
<dbReference type="PDB" id="6ZQF">
    <property type="method" value="EM"/>
    <property type="resolution" value="4.90 A"/>
    <property type="chains" value="UU=1-939"/>
</dbReference>
<dbReference type="PDB" id="7AJT">
    <property type="method" value="EM"/>
    <property type="resolution" value="4.60 A"/>
    <property type="chains" value="UU=1-939"/>
</dbReference>
<dbReference type="PDB" id="7AJU">
    <property type="method" value="EM"/>
    <property type="resolution" value="3.80 A"/>
    <property type="chains" value="UU=1-939"/>
</dbReference>
<dbReference type="PDB" id="7D4I">
    <property type="method" value="EM"/>
    <property type="resolution" value="4.00 A"/>
    <property type="chains" value="BE=1-939"/>
</dbReference>
<dbReference type="PDB" id="7D5S">
    <property type="method" value="EM"/>
    <property type="resolution" value="4.60 A"/>
    <property type="chains" value="BE=1-939"/>
</dbReference>
<dbReference type="PDB" id="7D5T">
    <property type="method" value="EM"/>
    <property type="resolution" value="6.00 A"/>
    <property type="chains" value="BE=1-939"/>
</dbReference>
<dbReference type="PDB" id="7D63">
    <property type="method" value="EM"/>
    <property type="resolution" value="12.30 A"/>
    <property type="chains" value="BE=1-939"/>
</dbReference>
<dbReference type="PDB" id="7SUK">
    <property type="method" value="EM"/>
    <property type="resolution" value="3.99 A"/>
    <property type="chains" value="LT=19-939"/>
</dbReference>
<dbReference type="PDBsum" id="4HNX"/>
<dbReference type="PDBsum" id="4NSX"/>
<dbReference type="PDBsum" id="5JPQ"/>
<dbReference type="PDBsum" id="5TZS"/>
<dbReference type="PDBsum" id="5WLC"/>
<dbReference type="PDBsum" id="5WYJ"/>
<dbReference type="PDBsum" id="5WYK"/>
<dbReference type="PDBsum" id="6KE6"/>
<dbReference type="PDBsum" id="6LQP"/>
<dbReference type="PDBsum" id="6LQQ"/>
<dbReference type="PDBsum" id="6LQR"/>
<dbReference type="PDBsum" id="6LQS"/>
<dbReference type="PDBsum" id="6LQT"/>
<dbReference type="PDBsum" id="6LQU"/>
<dbReference type="PDBsum" id="6LQV"/>
<dbReference type="PDBsum" id="6ND4"/>
<dbReference type="PDBsum" id="6ZQA"/>
<dbReference type="PDBsum" id="6ZQB"/>
<dbReference type="PDBsum" id="6ZQC"/>
<dbReference type="PDBsum" id="6ZQD"/>
<dbReference type="PDBsum" id="6ZQE"/>
<dbReference type="PDBsum" id="6ZQF"/>
<dbReference type="PDBsum" id="7AJT"/>
<dbReference type="PDBsum" id="7AJU"/>
<dbReference type="PDBsum" id="7D4I"/>
<dbReference type="PDBsum" id="7D5S"/>
<dbReference type="PDBsum" id="7D5T"/>
<dbReference type="PDBsum" id="7D63"/>
<dbReference type="PDBsum" id="7SUK"/>
<dbReference type="EMDB" id="EMD-0441"/>
<dbReference type="EMDB" id="EMD-0949"/>
<dbReference type="EMDB" id="EMD-0950"/>
<dbReference type="EMDB" id="EMD-0951"/>
<dbReference type="EMDB" id="EMD-0952"/>
<dbReference type="EMDB" id="EMD-0953"/>
<dbReference type="EMDB" id="EMD-0954"/>
<dbReference type="EMDB" id="EMD-0955"/>
<dbReference type="EMDB" id="EMD-11357"/>
<dbReference type="EMDB" id="EMD-11358"/>
<dbReference type="EMDB" id="EMD-11359"/>
<dbReference type="EMDB" id="EMD-11360"/>
<dbReference type="EMDB" id="EMD-11361"/>
<dbReference type="EMDB" id="EMD-11362"/>
<dbReference type="EMDB" id="EMD-11807"/>
<dbReference type="EMDB" id="EMD-11808"/>
<dbReference type="EMDB" id="EMD-25441"/>
<dbReference type="EMDB" id="EMD-30574"/>
<dbReference type="EMDB" id="EMD-30584"/>
<dbReference type="EMDB" id="EMD-30585"/>
<dbReference type="EMDB" id="EMD-30588"/>
<dbReference type="EMDB" id="EMD-6695"/>
<dbReference type="EMDB" id="EMD-6696"/>
<dbReference type="EMDB" id="EMD-8473"/>
<dbReference type="EMDB" id="EMD-8859"/>
<dbReference type="EMDB" id="EMD-9964"/>
<dbReference type="SMR" id="Q06078"/>
<dbReference type="BioGRID" id="31666">
    <property type="interactions" value="283"/>
</dbReference>
<dbReference type="ComplexPortal" id="CPX-1410">
    <property type="entry name" value="UTP-B complex"/>
</dbReference>
<dbReference type="DIP" id="DIP-6416N"/>
<dbReference type="FunCoup" id="Q06078">
    <property type="interactions" value="1373"/>
</dbReference>
<dbReference type="IntAct" id="Q06078">
    <property type="interactions" value="85"/>
</dbReference>
<dbReference type="MINT" id="Q06078"/>
<dbReference type="STRING" id="4932.YLR409C"/>
<dbReference type="iPTMnet" id="Q06078"/>
<dbReference type="PaxDb" id="4932-YLR409C"/>
<dbReference type="PeptideAtlas" id="Q06078"/>
<dbReference type="EnsemblFungi" id="YLR409C_mRNA">
    <property type="protein sequence ID" value="YLR409C"/>
    <property type="gene ID" value="YLR409C"/>
</dbReference>
<dbReference type="GeneID" id="851125"/>
<dbReference type="KEGG" id="sce:YLR409C"/>
<dbReference type="AGR" id="SGD:S000004401"/>
<dbReference type="SGD" id="S000004401">
    <property type="gene designation" value="UTP21"/>
</dbReference>
<dbReference type="VEuPathDB" id="FungiDB:YLR409C"/>
<dbReference type="eggNOG" id="KOG1539">
    <property type="taxonomic scope" value="Eukaryota"/>
</dbReference>
<dbReference type="GeneTree" id="ENSGT00940000153662"/>
<dbReference type="HOGENOM" id="CLU_002774_2_0_1"/>
<dbReference type="InParanoid" id="Q06078"/>
<dbReference type="OMA" id="CIYAWRA"/>
<dbReference type="OrthoDB" id="10250769at2759"/>
<dbReference type="BioCyc" id="YEAST:G3O-32471-MONOMER"/>
<dbReference type="Reactome" id="R-SCE-6791226">
    <property type="pathway name" value="Major pathway of rRNA processing in the nucleolus and cytosol"/>
</dbReference>
<dbReference type="BioGRID-ORCS" id="851125">
    <property type="hits" value="2 hits in 10 CRISPR screens"/>
</dbReference>
<dbReference type="EvolutionaryTrace" id="Q06078"/>
<dbReference type="PRO" id="PR:Q06078"/>
<dbReference type="Proteomes" id="UP000002311">
    <property type="component" value="Chromosome XII"/>
</dbReference>
<dbReference type="RNAct" id="Q06078">
    <property type="molecule type" value="protein"/>
</dbReference>
<dbReference type="GO" id="GO:0030686">
    <property type="term" value="C:90S preribosome"/>
    <property type="evidence" value="ECO:0007005"/>
    <property type="project" value="SGD"/>
</dbReference>
<dbReference type="GO" id="GO:0005730">
    <property type="term" value="C:nucleolus"/>
    <property type="evidence" value="ECO:0000314"/>
    <property type="project" value="SGD"/>
</dbReference>
<dbReference type="GO" id="GO:0005654">
    <property type="term" value="C:nucleoplasm"/>
    <property type="evidence" value="ECO:0000304"/>
    <property type="project" value="Reactome"/>
</dbReference>
<dbReference type="GO" id="GO:0005634">
    <property type="term" value="C:nucleus"/>
    <property type="evidence" value="ECO:0007005"/>
    <property type="project" value="SGD"/>
</dbReference>
<dbReference type="GO" id="GO:0034388">
    <property type="term" value="C:Pwp2p-containing subcomplex of 90S preribosome"/>
    <property type="evidence" value="ECO:0000314"/>
    <property type="project" value="SGD"/>
</dbReference>
<dbReference type="GO" id="GO:0032040">
    <property type="term" value="C:small-subunit processome"/>
    <property type="evidence" value="ECO:0000314"/>
    <property type="project" value="SGD"/>
</dbReference>
<dbReference type="GO" id="GO:0030490">
    <property type="term" value="P:maturation of SSU-rRNA"/>
    <property type="evidence" value="ECO:0000303"/>
    <property type="project" value="ComplexPortal"/>
</dbReference>
<dbReference type="GO" id="GO:0006364">
    <property type="term" value="P:rRNA processing"/>
    <property type="evidence" value="ECO:0000316"/>
    <property type="project" value="SGD"/>
</dbReference>
<dbReference type="CDD" id="cd00200">
    <property type="entry name" value="WD40"/>
    <property type="match status" value="1"/>
</dbReference>
<dbReference type="FunFam" id="2.130.10.10:FF:000410">
    <property type="entry name" value="U3 small nucleolar RNA-associated protein 21"/>
    <property type="match status" value="1"/>
</dbReference>
<dbReference type="FunFam" id="2.130.10.10:FF:000710">
    <property type="entry name" value="U3 snoRNP protein"/>
    <property type="match status" value="1"/>
</dbReference>
<dbReference type="Gene3D" id="2.130.10.10">
    <property type="entry name" value="YVTN repeat-like/Quinoprotein amine dehydrogenase"/>
    <property type="match status" value="2"/>
</dbReference>
<dbReference type="InterPro" id="IPR011047">
    <property type="entry name" value="Quinoprotein_ADH-like_sf"/>
</dbReference>
<dbReference type="InterPro" id="IPR007319">
    <property type="entry name" value="SSU_processome_Utp21"/>
</dbReference>
<dbReference type="InterPro" id="IPR015943">
    <property type="entry name" value="WD40/YVTN_repeat-like_dom_sf"/>
</dbReference>
<dbReference type="InterPro" id="IPR019775">
    <property type="entry name" value="WD40_repeat_CS"/>
</dbReference>
<dbReference type="InterPro" id="IPR036322">
    <property type="entry name" value="WD40_repeat_dom_sf"/>
</dbReference>
<dbReference type="InterPro" id="IPR001680">
    <property type="entry name" value="WD40_rpt"/>
</dbReference>
<dbReference type="PANTHER" id="PTHR22840">
    <property type="entry name" value="WD REPEAT-CONTAINING PROTEIN 36"/>
    <property type="match status" value="1"/>
</dbReference>
<dbReference type="PANTHER" id="PTHR22840:SF12">
    <property type="entry name" value="WD REPEAT-CONTAINING PROTEIN 36"/>
    <property type="match status" value="1"/>
</dbReference>
<dbReference type="Pfam" id="PF25171">
    <property type="entry name" value="Beta-prop_WDR36-Utp21_1st"/>
    <property type="match status" value="1"/>
</dbReference>
<dbReference type="Pfam" id="PF25168">
    <property type="entry name" value="Beta-prop_WDR36-Utp21_2nd"/>
    <property type="match status" value="1"/>
</dbReference>
<dbReference type="Pfam" id="PF04192">
    <property type="entry name" value="Utp21"/>
    <property type="match status" value="1"/>
</dbReference>
<dbReference type="SMART" id="SM00320">
    <property type="entry name" value="WD40"/>
    <property type="match status" value="9"/>
</dbReference>
<dbReference type="SUPFAM" id="SSF50998">
    <property type="entry name" value="Quinoprotein alcohol dehydrogenase-like"/>
    <property type="match status" value="1"/>
</dbReference>
<dbReference type="SUPFAM" id="SSF50978">
    <property type="entry name" value="WD40 repeat-like"/>
    <property type="match status" value="1"/>
</dbReference>
<dbReference type="PROSITE" id="PS00678">
    <property type="entry name" value="WD_REPEATS_1"/>
    <property type="match status" value="1"/>
</dbReference>
<dbReference type="PROSITE" id="PS50082">
    <property type="entry name" value="WD_REPEATS_2"/>
    <property type="match status" value="1"/>
</dbReference>
<dbReference type="PROSITE" id="PS50294">
    <property type="entry name" value="WD_REPEATS_REGION"/>
    <property type="match status" value="1"/>
</dbReference>
<feature type="initiator methionine" description="Removed" evidence="7">
    <location>
        <position position="1"/>
    </location>
</feature>
<feature type="chain" id="PRO_0000051480" description="U3 small nucleolar RNA-associated protein 21">
    <location>
        <begin position="2"/>
        <end position="939"/>
    </location>
</feature>
<feature type="repeat" description="WD 1" evidence="1 5">
    <location>
        <begin position="40"/>
        <end position="71"/>
    </location>
</feature>
<feature type="repeat" description="WD 2" evidence="1 5">
    <location>
        <begin position="81"/>
        <end position="111"/>
    </location>
</feature>
<feature type="repeat" description="WD 3" evidence="1 5">
    <location>
        <begin position="119"/>
        <end position="158"/>
    </location>
</feature>
<feature type="repeat" description="WD 4" evidence="1 5">
    <location>
        <begin position="168"/>
        <end position="201"/>
    </location>
</feature>
<feature type="repeat" description="WD 5" evidence="1 5">
    <location>
        <begin position="208"/>
        <end position="245"/>
    </location>
</feature>
<feature type="repeat" description="WD 6" evidence="1 5">
    <location>
        <begin position="252"/>
        <end position="287"/>
    </location>
</feature>
<feature type="repeat" description="WD 7" evidence="1 5">
    <location>
        <begin position="295"/>
        <end position="347"/>
    </location>
</feature>
<feature type="repeat" description="WD 8" evidence="1 5">
    <location>
        <begin position="354"/>
        <end position="388"/>
    </location>
</feature>
<feature type="repeat" description="WD 9" evidence="1 5">
    <location>
        <begin position="415"/>
        <end position="454"/>
    </location>
</feature>
<feature type="repeat" description="WD 10" evidence="1 5">
    <location>
        <begin position="463"/>
        <end position="497"/>
    </location>
</feature>
<feature type="repeat" description="WD 11" evidence="1 5">
    <location>
        <begin position="505"/>
        <end position="541"/>
    </location>
</feature>
<feature type="repeat" description="WD 12" evidence="1 5">
    <location>
        <begin position="546"/>
        <end position="581"/>
    </location>
</feature>
<feature type="repeat" description="WD 13" evidence="1 5">
    <location>
        <begin position="583"/>
        <end position="624"/>
    </location>
</feature>
<feature type="repeat" description="WD 14" evidence="1 5">
    <location>
        <begin position="626"/>
        <end position="664"/>
    </location>
</feature>
<feature type="modified residue" description="N-acetylserine" evidence="7">
    <location>
        <position position="2"/>
    </location>
</feature>
<feature type="modified residue" description="Phosphoserine" evidence="6">
    <location>
        <position position="772"/>
    </location>
</feature>
<feature type="strand" evidence="8">
    <location>
        <begin position="22"/>
        <end position="31"/>
    </location>
</feature>
<feature type="strand" evidence="8">
    <location>
        <begin position="40"/>
        <end position="44"/>
    </location>
</feature>
<feature type="strand" evidence="8">
    <location>
        <begin position="47"/>
        <end position="53"/>
    </location>
</feature>
<feature type="strand" evidence="8">
    <location>
        <begin position="58"/>
        <end position="62"/>
    </location>
</feature>
<feature type="turn" evidence="8">
    <location>
        <begin position="63"/>
        <end position="65"/>
    </location>
</feature>
<feature type="strand" evidence="8">
    <location>
        <begin position="68"/>
        <end position="71"/>
    </location>
</feature>
<feature type="strand" evidence="8">
    <location>
        <begin position="82"/>
        <end position="86"/>
    </location>
</feature>
<feature type="strand" evidence="8">
    <location>
        <begin position="89"/>
        <end position="94"/>
    </location>
</feature>
<feature type="strand" evidence="8">
    <location>
        <begin position="97"/>
        <end position="102"/>
    </location>
</feature>
<feature type="strand" evidence="8">
    <location>
        <begin position="105"/>
        <end position="111"/>
    </location>
</feature>
<feature type="strand" evidence="8">
    <location>
        <begin position="113"/>
        <end position="116"/>
    </location>
</feature>
<feature type="strand" evidence="8">
    <location>
        <begin position="118"/>
        <end position="124"/>
    </location>
</feature>
<feature type="strand" evidence="8">
    <location>
        <begin position="127"/>
        <end position="132"/>
    </location>
</feature>
<feature type="strand" evidence="8">
    <location>
        <begin position="135"/>
        <end position="141"/>
    </location>
</feature>
<feature type="strand" evidence="8">
    <location>
        <begin position="147"/>
        <end position="149"/>
    </location>
</feature>
<feature type="strand" evidence="8">
    <location>
        <begin position="152"/>
        <end position="158"/>
    </location>
</feature>
<feature type="turn" evidence="8">
    <location>
        <begin position="161"/>
        <end position="163"/>
    </location>
</feature>
<feature type="strand" evidence="8">
    <location>
        <begin position="165"/>
        <end position="171"/>
    </location>
</feature>
<feature type="strand" evidence="8">
    <location>
        <begin position="179"/>
        <end position="186"/>
    </location>
</feature>
<feature type="strand" evidence="8">
    <location>
        <begin position="188"/>
        <end position="192"/>
    </location>
</feature>
<feature type="turn" evidence="8">
    <location>
        <begin position="193"/>
        <end position="195"/>
    </location>
</feature>
<feature type="strand" evidence="8">
    <location>
        <begin position="198"/>
        <end position="201"/>
    </location>
</feature>
<feature type="strand" evidence="8">
    <location>
        <begin position="209"/>
        <end position="214"/>
    </location>
</feature>
<feature type="strand" evidence="8">
    <location>
        <begin position="220"/>
        <end position="234"/>
    </location>
</feature>
<feature type="turn" evidence="8">
    <location>
        <begin position="235"/>
        <end position="238"/>
    </location>
</feature>
<feature type="strand" evidence="8">
    <location>
        <begin position="239"/>
        <end position="245"/>
    </location>
</feature>
<feature type="strand" evidence="8">
    <location>
        <begin position="251"/>
        <end position="256"/>
    </location>
</feature>
<feature type="strand" evidence="8">
    <location>
        <begin position="259"/>
        <end position="261"/>
    </location>
</feature>
<feature type="strand" evidence="8">
    <location>
        <begin position="263"/>
        <end position="268"/>
    </location>
</feature>
<feature type="strand" evidence="8">
    <location>
        <begin position="273"/>
        <end position="277"/>
    </location>
</feature>
<feature type="turn" evidence="8">
    <location>
        <begin position="278"/>
        <end position="281"/>
    </location>
</feature>
<feature type="strand" evidence="8">
    <location>
        <begin position="282"/>
        <end position="287"/>
    </location>
</feature>
<feature type="helix" evidence="8">
    <location>
        <begin position="293"/>
        <end position="295"/>
    </location>
</feature>
<feature type="strand" evidence="8">
    <location>
        <begin position="299"/>
        <end position="303"/>
    </location>
</feature>
<feature type="strand" evidence="8">
    <location>
        <begin position="307"/>
        <end position="313"/>
    </location>
</feature>
<feature type="strand" evidence="8">
    <location>
        <begin position="315"/>
        <end position="323"/>
    </location>
</feature>
<feature type="strand" evidence="8">
    <location>
        <begin position="341"/>
        <end position="347"/>
    </location>
</feature>
<feature type="strand" evidence="8">
    <location>
        <begin position="353"/>
        <end position="358"/>
    </location>
</feature>
<feature type="strand" evidence="8">
    <location>
        <begin position="365"/>
        <end position="370"/>
    </location>
</feature>
<feature type="strand" evidence="8">
    <location>
        <begin position="375"/>
        <end position="379"/>
    </location>
</feature>
<feature type="strand" evidence="8">
    <location>
        <begin position="386"/>
        <end position="388"/>
    </location>
</feature>
<feature type="strand" evidence="8">
    <location>
        <begin position="414"/>
        <end position="419"/>
    </location>
</feature>
<feature type="turn" evidence="8">
    <location>
        <begin position="422"/>
        <end position="426"/>
    </location>
</feature>
<feature type="strand" evidence="8">
    <location>
        <begin position="430"/>
        <end position="434"/>
    </location>
</feature>
<feature type="strand" evidence="8">
    <location>
        <begin position="438"/>
        <end position="444"/>
    </location>
</feature>
<feature type="turn" evidence="8">
    <location>
        <begin position="445"/>
        <end position="448"/>
    </location>
</feature>
<feature type="strand" evidence="8">
    <location>
        <begin position="449"/>
        <end position="456"/>
    </location>
</feature>
<feature type="strand" evidence="8">
    <location>
        <begin position="458"/>
        <end position="460"/>
    </location>
</feature>
<feature type="strand" evidence="8">
    <location>
        <begin position="463"/>
        <end position="468"/>
    </location>
</feature>
<feature type="strand" evidence="8">
    <location>
        <begin position="474"/>
        <end position="479"/>
    </location>
</feature>
<feature type="strand" evidence="8">
    <location>
        <begin position="482"/>
        <end position="488"/>
    </location>
</feature>
<feature type="turn" evidence="8">
    <location>
        <begin position="489"/>
        <end position="491"/>
    </location>
</feature>
<feature type="strand" evidence="8">
    <location>
        <begin position="494"/>
        <end position="499"/>
    </location>
</feature>
<feature type="strand" evidence="8">
    <location>
        <begin position="505"/>
        <end position="510"/>
    </location>
</feature>
<feature type="strand" evidence="8">
    <location>
        <begin position="516"/>
        <end position="521"/>
    </location>
</feature>
<feature type="strand" evidence="8">
    <location>
        <begin position="524"/>
        <end position="533"/>
    </location>
</feature>
<feature type="strand" evidence="8">
    <location>
        <begin position="536"/>
        <end position="541"/>
    </location>
</feature>
<feature type="strand" evidence="8">
    <location>
        <begin position="546"/>
        <end position="551"/>
    </location>
</feature>
<feature type="turn" evidence="8">
    <location>
        <begin position="553"/>
        <end position="555"/>
    </location>
</feature>
<feature type="strand" evidence="8">
    <location>
        <begin position="557"/>
        <end position="562"/>
    </location>
</feature>
<feature type="strand" evidence="8">
    <location>
        <begin position="567"/>
        <end position="571"/>
    </location>
</feature>
<feature type="turn" evidence="8">
    <location>
        <begin position="572"/>
        <end position="575"/>
    </location>
</feature>
<feature type="strand" evidence="8">
    <location>
        <begin position="576"/>
        <end position="581"/>
    </location>
</feature>
<feature type="strand" evidence="8">
    <location>
        <begin position="588"/>
        <end position="593"/>
    </location>
</feature>
<feature type="strand" evidence="8">
    <location>
        <begin position="597"/>
        <end position="604"/>
    </location>
</feature>
<feature type="strand" evidence="8">
    <location>
        <begin position="607"/>
        <end position="613"/>
    </location>
</feature>
<feature type="turn" evidence="8">
    <location>
        <begin position="614"/>
        <end position="616"/>
    </location>
</feature>
<feature type="strand" evidence="8">
    <location>
        <begin position="619"/>
        <end position="624"/>
    </location>
</feature>
<feature type="strand" evidence="8">
    <location>
        <begin position="629"/>
        <end position="634"/>
    </location>
</feature>
<feature type="strand" evidence="8">
    <location>
        <begin position="640"/>
        <end position="647"/>
    </location>
</feature>
<feature type="strand" evidence="8">
    <location>
        <begin position="649"/>
        <end position="656"/>
    </location>
</feature>
<reference key="1">
    <citation type="journal article" date="1997" name="Nature">
        <title>The nucleotide sequence of Saccharomyces cerevisiae chromosome XII.</title>
        <authorList>
            <person name="Johnston M."/>
            <person name="Hillier L.W."/>
            <person name="Riles L."/>
            <person name="Albermann K."/>
            <person name="Andre B."/>
            <person name="Ansorge W."/>
            <person name="Benes V."/>
            <person name="Brueckner M."/>
            <person name="Delius H."/>
            <person name="Dubois E."/>
            <person name="Duesterhoeft A."/>
            <person name="Entian K.-D."/>
            <person name="Floeth M."/>
            <person name="Goffeau A."/>
            <person name="Hebling U."/>
            <person name="Heumann K."/>
            <person name="Heuss-Neitzel D."/>
            <person name="Hilbert H."/>
            <person name="Hilger F."/>
            <person name="Kleine K."/>
            <person name="Koetter P."/>
            <person name="Louis E.J."/>
            <person name="Messenguy F."/>
            <person name="Mewes H.-W."/>
            <person name="Miosga T."/>
            <person name="Moestl D."/>
            <person name="Mueller-Auer S."/>
            <person name="Nentwich U."/>
            <person name="Obermaier B."/>
            <person name="Piravandi E."/>
            <person name="Pohl T.M."/>
            <person name="Portetelle D."/>
            <person name="Purnelle B."/>
            <person name="Rechmann S."/>
            <person name="Rieger M."/>
            <person name="Rinke M."/>
            <person name="Rose M."/>
            <person name="Scharfe M."/>
            <person name="Scherens B."/>
            <person name="Scholler P."/>
            <person name="Schwager C."/>
            <person name="Schwarz S."/>
            <person name="Underwood A.P."/>
            <person name="Urrestarazu L.A."/>
            <person name="Vandenbol M."/>
            <person name="Verhasselt P."/>
            <person name="Vierendeels F."/>
            <person name="Voet M."/>
            <person name="Volckaert G."/>
            <person name="Voss H."/>
            <person name="Wambutt R."/>
            <person name="Wedler E."/>
            <person name="Wedler H."/>
            <person name="Zimmermann F.K."/>
            <person name="Zollner A."/>
            <person name="Hani J."/>
            <person name="Hoheisel J.D."/>
        </authorList>
    </citation>
    <scope>NUCLEOTIDE SEQUENCE [LARGE SCALE GENOMIC DNA]</scope>
    <source>
        <strain>ATCC 204508 / S288c</strain>
    </source>
</reference>
<reference key="2">
    <citation type="journal article" date="2014" name="G3 (Bethesda)">
        <title>The reference genome sequence of Saccharomyces cerevisiae: Then and now.</title>
        <authorList>
            <person name="Engel S.R."/>
            <person name="Dietrich F.S."/>
            <person name="Fisk D.G."/>
            <person name="Binkley G."/>
            <person name="Balakrishnan R."/>
            <person name="Costanzo M.C."/>
            <person name="Dwight S.S."/>
            <person name="Hitz B.C."/>
            <person name="Karra K."/>
            <person name="Nash R.S."/>
            <person name="Weng S."/>
            <person name="Wong E.D."/>
            <person name="Lloyd P."/>
            <person name="Skrzypek M.S."/>
            <person name="Miyasato S.R."/>
            <person name="Simison M."/>
            <person name="Cherry J.M."/>
        </authorList>
    </citation>
    <scope>GENOME REANNOTATION</scope>
    <source>
        <strain>ATCC 204508 / S288c</strain>
    </source>
</reference>
<reference key="3">
    <citation type="journal article" date="2003" name="Nature">
        <title>Global analysis of protein localization in budding yeast.</title>
        <authorList>
            <person name="Huh W.-K."/>
            <person name="Falvo J.V."/>
            <person name="Gerke L.C."/>
            <person name="Carroll A.S."/>
            <person name="Howson R.W."/>
            <person name="Weissman J.S."/>
            <person name="O'Shea E.K."/>
        </authorList>
    </citation>
    <scope>SUBCELLULAR LOCATION [LARGE SCALE ANALYSIS]</scope>
</reference>
<reference key="4">
    <citation type="journal article" date="2003" name="Nature">
        <title>Global analysis of protein expression in yeast.</title>
        <authorList>
            <person name="Ghaemmaghami S."/>
            <person name="Huh W.-K."/>
            <person name="Bower K."/>
            <person name="Howson R.W."/>
            <person name="Belle A."/>
            <person name="Dephoure N."/>
            <person name="O'Shea E.K."/>
            <person name="Weissman J.S."/>
        </authorList>
    </citation>
    <scope>LEVEL OF PROTEIN EXPRESSION [LARGE SCALE ANALYSIS]</scope>
</reference>
<reference key="5">
    <citation type="journal article" date="2004" name="Eukaryot. Cell">
        <title>The small-subunit processome is a ribosome assembly intermediate.</title>
        <authorList>
            <person name="Bernstein K.A."/>
            <person name="Gallagher J.E.G."/>
            <person name="Mitchell B.M."/>
            <person name="Granneman S."/>
            <person name="Baserga S.J."/>
        </authorList>
    </citation>
    <scope>FUNCTION</scope>
    <scope>INTERACTION WITH MPP10 AND SNORNA U3</scope>
    <scope>IDENTIFICATION IN SSU PROCESSOME</scope>
    <scope>SUBCELLULAR LOCATION</scope>
</reference>
<reference key="6">
    <citation type="journal article" date="2008" name="Mol. Cell. Proteomics">
        <title>A multidimensional chromatography technology for in-depth phosphoproteome analysis.</title>
        <authorList>
            <person name="Albuquerque C.P."/>
            <person name="Smolka M.B."/>
            <person name="Payne S.H."/>
            <person name="Bafna V."/>
            <person name="Eng J."/>
            <person name="Zhou H."/>
        </authorList>
    </citation>
    <scope>PHOSPHORYLATION [LARGE SCALE ANALYSIS] AT SER-772</scope>
    <scope>IDENTIFICATION BY MASS SPECTROMETRY [LARGE SCALE ANALYSIS]</scope>
</reference>
<reference key="7">
    <citation type="journal article" date="2012" name="Proc. Natl. Acad. Sci. U.S.A.">
        <title>N-terminal acetylome analyses and functional insights of the N-terminal acetyltransferase NatB.</title>
        <authorList>
            <person name="Van Damme P."/>
            <person name="Lasa M."/>
            <person name="Polevoda B."/>
            <person name="Gazquez C."/>
            <person name="Elosegui-Artola A."/>
            <person name="Kim D.S."/>
            <person name="De Juan-Pardo E."/>
            <person name="Demeyer K."/>
            <person name="Hole K."/>
            <person name="Larrea E."/>
            <person name="Timmerman E."/>
            <person name="Prieto J."/>
            <person name="Arnesen T."/>
            <person name="Sherman F."/>
            <person name="Gevaert K."/>
            <person name="Aldabe R."/>
        </authorList>
    </citation>
    <scope>ACETYLATION [LARGE SCALE ANALYSIS] AT SER-2</scope>
    <scope>CLEAVAGE OF INITIATOR METHIONINE [LARGE SCALE ANALYSIS]</scope>
    <scope>IDENTIFICATION BY MASS SPECTROMETRY [LARGE SCALE ANALYSIS]</scope>
</reference>
<reference key="8">
    <citation type="journal article" date="2014" name="PLoS ONE">
        <title>Structure of Utp21 tandem WD domain provides insight into the organization of the UTPB complex involved in ribosome synthesis.</title>
        <authorList>
            <person name="Zhang C."/>
            <person name="Lin J."/>
            <person name="Liu W."/>
            <person name="Chen X."/>
            <person name="Chen R."/>
            <person name="Ye K."/>
        </authorList>
    </citation>
    <scope>X-RAY CRYSTALLOGRAPHY (2.1 ANGSTROMS) OF 1-684</scope>
    <scope>SUBUNIT</scope>
    <scope>WD REPEATS</scope>
</reference>
<name>UTP21_YEAST</name>
<gene>
    <name type="primary">UTP21</name>
    <name type="ordered locus">YLR409C</name>
    <name type="ORF">L8084.22</name>
</gene>
<evidence type="ECO:0000255" key="1">
    <source>
        <dbReference type="PROSITE-ProRule" id="PRU00221"/>
    </source>
</evidence>
<evidence type="ECO:0000269" key="2">
    <source>
    </source>
</evidence>
<evidence type="ECO:0000269" key="3">
    <source>
    </source>
</evidence>
<evidence type="ECO:0000269" key="4">
    <source>
    </source>
</evidence>
<evidence type="ECO:0000269" key="5">
    <source>
    </source>
</evidence>
<evidence type="ECO:0007744" key="6">
    <source>
    </source>
</evidence>
<evidence type="ECO:0007744" key="7">
    <source>
    </source>
</evidence>
<evidence type="ECO:0007829" key="8">
    <source>
        <dbReference type="PDB" id="4NSX"/>
    </source>
</evidence>
<accession>Q06078</accession>
<accession>D6VZ43</accession>
<proteinExistence type="evidence at protein level"/>
<organism>
    <name type="scientific">Saccharomyces cerevisiae (strain ATCC 204508 / S288c)</name>
    <name type="common">Baker's yeast</name>
    <dbReference type="NCBI Taxonomy" id="559292"/>
    <lineage>
        <taxon>Eukaryota</taxon>
        <taxon>Fungi</taxon>
        <taxon>Dikarya</taxon>
        <taxon>Ascomycota</taxon>
        <taxon>Saccharomycotina</taxon>
        <taxon>Saccharomycetes</taxon>
        <taxon>Saccharomycetales</taxon>
        <taxon>Saccharomycetaceae</taxon>
        <taxon>Saccharomyces</taxon>
    </lineage>
</organism>
<keyword id="KW-0002">3D-structure</keyword>
<keyword id="KW-0007">Acetylation</keyword>
<keyword id="KW-0539">Nucleus</keyword>
<keyword id="KW-0597">Phosphoprotein</keyword>
<keyword id="KW-1185">Reference proteome</keyword>
<keyword id="KW-0677">Repeat</keyword>
<keyword id="KW-0687">Ribonucleoprotein</keyword>
<keyword id="KW-0690">Ribosome biogenesis</keyword>
<keyword id="KW-0698">rRNA processing</keyword>
<keyword id="KW-0853">WD repeat</keyword>
<sequence length="939" mass="104791">MSIDLKKRKVEEDVRSRGKNSKIFSPFRIIGNVSNGVPFATGTLGSTFYIVTCVGKTFQIYDANTLHLLFVSEKETPSSIVALSAHFHYVYAAYENKVGIYKRGIEEHLLELETDANVEHLCIFGDYLCASTDDNSIFIYKKSDPQDKYPSEFYTKLTVTEIQGGEIVSLQHLATYLNKLTVVTKSNVLLFNVRTGKLVFTSNEFPDQITTAEPAPVLDIIALGTVTGEVIMFNMRKGKRIRTIKIPQSRISSLSFRTDGSSHLSVGTSSGDLIFYDLDRRSRIHVLKNIHRESYGGVTQATFLNGQPIIVTSGGDNSLKEYVFDPSLSQGSGDVVVQPPRYLRSRGGHSQPPSYIAFADSQSHFMLSASKDRSLWSFSLRKDAQSQEMSQRLHKKQDGGRVGGSTIKSKFPEIVALAIENARIGEWENIITAHKDEKFARTWDMRNKRVGRWTFDTTDDGFVKSVAMSQCGNFGFIGSSNGSITIYNMQSGILRKKYKLHKRAVTGISLDGMNRKMVSCGLDGIVGFYDFNKSTLLGKLKLDAPITAMVYHRSSDLFALALDDLSIVVIDAVTQRVVRQLWGHSNRITAFDFSPEGRWIVSASLDSTIRTWDLPTGGCIDGIIVDNVATNVKFSPNGDLLATTHVTGNGICIWTNRAQFKTVSTRTIDESEFARMALPSTSVRGNDSMLSGALESNGGEDLNDIDFNTYTSLEQIDKELLTLSIGPRSKMNTLLHLDVIRKRSKPKEAPKKSEKLPFFLQLSGEKVGDEASVREGIAHETPEEIHRRDQEAQKKLDAEEQMNKFKVTGRLGFESHFTKQLREGSQSKDYSSLLATLINFSPAAVDLEIRSLNSFEPFDEIVWFIDALTQGLKSNKNFELYETFMSLLFKAHGDVIHANNKNQDIASALQNWEDVHKKEDRLDDLVKFCMGVAAFVTTA</sequence>